<comment type="function">
    <text evidence="1">Allows the formation of correctly charged Gln-tRNA(Gln) through the transamidation of misacylated Glu-tRNA(Gln) in organisms which lack glutaminyl-tRNA synthetase. The reaction takes place in the presence of glutamine and ATP through an activated gamma-phospho-Glu-tRNA(Gln).</text>
</comment>
<comment type="catalytic activity">
    <reaction evidence="1">
        <text>L-glutamyl-tRNA(Gln) + L-glutamine + ATP + H2O = L-glutaminyl-tRNA(Gln) + L-glutamate + ADP + phosphate + H(+)</text>
        <dbReference type="Rhea" id="RHEA:17521"/>
        <dbReference type="Rhea" id="RHEA-COMP:9681"/>
        <dbReference type="Rhea" id="RHEA-COMP:9684"/>
        <dbReference type="ChEBI" id="CHEBI:15377"/>
        <dbReference type="ChEBI" id="CHEBI:15378"/>
        <dbReference type="ChEBI" id="CHEBI:29985"/>
        <dbReference type="ChEBI" id="CHEBI:30616"/>
        <dbReference type="ChEBI" id="CHEBI:43474"/>
        <dbReference type="ChEBI" id="CHEBI:58359"/>
        <dbReference type="ChEBI" id="CHEBI:78520"/>
        <dbReference type="ChEBI" id="CHEBI:78521"/>
        <dbReference type="ChEBI" id="CHEBI:456216"/>
        <dbReference type="EC" id="6.3.5.7"/>
    </reaction>
</comment>
<comment type="subunit">
    <text evidence="1">Heterotrimer of A, B and C subunits.</text>
</comment>
<comment type="similarity">
    <text evidence="1">Belongs to the amidase family. GatA subfamily.</text>
</comment>
<protein>
    <recommendedName>
        <fullName evidence="1">Glutamyl-tRNA(Gln) amidotransferase subunit A</fullName>
        <shortName evidence="1">Glu-ADT subunit A</shortName>
        <ecNumber evidence="1">6.3.5.7</ecNumber>
    </recommendedName>
</protein>
<reference key="1">
    <citation type="journal article" date="2003" name="Science">
        <title>Genome of Geobacter sulfurreducens: metal reduction in subsurface environments.</title>
        <authorList>
            <person name="Methe B.A."/>
            <person name="Nelson K.E."/>
            <person name="Eisen J.A."/>
            <person name="Paulsen I.T."/>
            <person name="Nelson W.C."/>
            <person name="Heidelberg J.F."/>
            <person name="Wu D."/>
            <person name="Wu M."/>
            <person name="Ward N.L."/>
            <person name="Beanan M.J."/>
            <person name="Dodson R.J."/>
            <person name="Madupu R."/>
            <person name="Brinkac L.M."/>
            <person name="Daugherty S.C."/>
            <person name="DeBoy R.T."/>
            <person name="Durkin A.S."/>
            <person name="Gwinn M.L."/>
            <person name="Kolonay J.F."/>
            <person name="Sullivan S.A."/>
            <person name="Haft D.H."/>
            <person name="Selengut J."/>
            <person name="Davidsen T.M."/>
            <person name="Zafar N."/>
            <person name="White O."/>
            <person name="Tran B."/>
            <person name="Romero C."/>
            <person name="Forberger H.A."/>
            <person name="Weidman J.F."/>
            <person name="Khouri H.M."/>
            <person name="Feldblyum T.V."/>
            <person name="Utterback T.R."/>
            <person name="Van Aken S.E."/>
            <person name="Lovley D.R."/>
            <person name="Fraser C.M."/>
        </authorList>
    </citation>
    <scope>NUCLEOTIDE SEQUENCE [LARGE SCALE GENOMIC DNA]</scope>
    <source>
        <strain>ATCC 51573 / DSM 12127 / PCA</strain>
    </source>
</reference>
<dbReference type="EC" id="6.3.5.7" evidence="1"/>
<dbReference type="EMBL" id="AE017180">
    <property type="protein sequence ID" value="AAR36771.1"/>
    <property type="molecule type" value="Genomic_DNA"/>
</dbReference>
<dbReference type="RefSeq" id="NP_954421.1">
    <property type="nucleotide sequence ID" value="NC_002939.5"/>
</dbReference>
<dbReference type="RefSeq" id="WP_010943992.1">
    <property type="nucleotide sequence ID" value="NC_002939.5"/>
</dbReference>
<dbReference type="SMR" id="Q746Y7"/>
<dbReference type="STRING" id="243231.GSU3381"/>
<dbReference type="EnsemblBacteria" id="AAR36771">
    <property type="protein sequence ID" value="AAR36771"/>
    <property type="gene ID" value="GSU3381"/>
</dbReference>
<dbReference type="KEGG" id="gsu:GSU3381"/>
<dbReference type="PATRIC" id="fig|243231.5.peg.3403"/>
<dbReference type="eggNOG" id="COG0154">
    <property type="taxonomic scope" value="Bacteria"/>
</dbReference>
<dbReference type="HOGENOM" id="CLU_009600_0_3_7"/>
<dbReference type="InParanoid" id="Q746Y7"/>
<dbReference type="OrthoDB" id="9811471at2"/>
<dbReference type="Proteomes" id="UP000000577">
    <property type="component" value="Chromosome"/>
</dbReference>
<dbReference type="GO" id="GO:0030956">
    <property type="term" value="C:glutamyl-tRNA(Gln) amidotransferase complex"/>
    <property type="evidence" value="ECO:0007669"/>
    <property type="project" value="InterPro"/>
</dbReference>
<dbReference type="GO" id="GO:0005524">
    <property type="term" value="F:ATP binding"/>
    <property type="evidence" value="ECO:0007669"/>
    <property type="project" value="UniProtKB-KW"/>
</dbReference>
<dbReference type="GO" id="GO:0050567">
    <property type="term" value="F:glutaminyl-tRNA synthase (glutamine-hydrolyzing) activity"/>
    <property type="evidence" value="ECO:0007669"/>
    <property type="project" value="UniProtKB-UniRule"/>
</dbReference>
<dbReference type="GO" id="GO:0006412">
    <property type="term" value="P:translation"/>
    <property type="evidence" value="ECO:0007669"/>
    <property type="project" value="UniProtKB-UniRule"/>
</dbReference>
<dbReference type="Gene3D" id="3.90.1300.10">
    <property type="entry name" value="Amidase signature (AS) domain"/>
    <property type="match status" value="1"/>
</dbReference>
<dbReference type="HAMAP" id="MF_00120">
    <property type="entry name" value="GatA"/>
    <property type="match status" value="1"/>
</dbReference>
<dbReference type="InterPro" id="IPR000120">
    <property type="entry name" value="Amidase"/>
</dbReference>
<dbReference type="InterPro" id="IPR020556">
    <property type="entry name" value="Amidase_CS"/>
</dbReference>
<dbReference type="InterPro" id="IPR023631">
    <property type="entry name" value="Amidase_dom"/>
</dbReference>
<dbReference type="InterPro" id="IPR036928">
    <property type="entry name" value="AS_sf"/>
</dbReference>
<dbReference type="InterPro" id="IPR004412">
    <property type="entry name" value="GatA"/>
</dbReference>
<dbReference type="NCBIfam" id="TIGR00132">
    <property type="entry name" value="gatA"/>
    <property type="match status" value="1"/>
</dbReference>
<dbReference type="PANTHER" id="PTHR11895:SF151">
    <property type="entry name" value="GLUTAMYL-TRNA(GLN) AMIDOTRANSFERASE SUBUNIT A"/>
    <property type="match status" value="1"/>
</dbReference>
<dbReference type="PANTHER" id="PTHR11895">
    <property type="entry name" value="TRANSAMIDASE"/>
    <property type="match status" value="1"/>
</dbReference>
<dbReference type="Pfam" id="PF01425">
    <property type="entry name" value="Amidase"/>
    <property type="match status" value="1"/>
</dbReference>
<dbReference type="SUPFAM" id="SSF75304">
    <property type="entry name" value="Amidase signature (AS) enzymes"/>
    <property type="match status" value="1"/>
</dbReference>
<dbReference type="PROSITE" id="PS00571">
    <property type="entry name" value="AMIDASES"/>
    <property type="match status" value="1"/>
</dbReference>
<proteinExistence type="inferred from homology"/>
<organism>
    <name type="scientific">Geobacter sulfurreducens (strain ATCC 51573 / DSM 12127 / PCA)</name>
    <dbReference type="NCBI Taxonomy" id="243231"/>
    <lineage>
        <taxon>Bacteria</taxon>
        <taxon>Pseudomonadati</taxon>
        <taxon>Thermodesulfobacteriota</taxon>
        <taxon>Desulfuromonadia</taxon>
        <taxon>Geobacterales</taxon>
        <taxon>Geobacteraceae</taxon>
        <taxon>Geobacter</taxon>
    </lineage>
</organism>
<evidence type="ECO:0000255" key="1">
    <source>
        <dbReference type="HAMAP-Rule" id="MF_00120"/>
    </source>
</evidence>
<gene>
    <name evidence="1" type="primary">gatA</name>
    <name type="ordered locus">GSU3381</name>
</gene>
<sequence>MELFELTLHELHDKLAKREVSSVEATRALLARIEATDSRVNAYITVTPDEALAAAEAADRRIAAGGLTPLTGVPVALKDIFVTRGIRTTCGSKILGNFIPPYDGTVVAKLREAGAVIVGKLNQDEFAMGSSGESSAFGATKNPWNLACIPGGSSSGSAAAIAARSATATLGTDTGGSIRQPASHCGCVGLRPTYGRVSRYGVIAYASSLDQVGPVTRDVTDCALMLGAVAGHDPLDSTSIDLPVPDYAAALTGQVKGLRLGLPKEYYLEGLDPDVKRALDAAIETYRGLGAEFVEVSLPHTDYAVATYYLIATAEASSNLARYDGVRFGHRAAGAANLIDMFRRSRAEGFGAEVKRRIMIGTYALSSGYYDAYYLKAQKVRTLIMQDFMKAFEQVDALLTPVAPTPAFKIGEKVDDPLQMYLSDIFTIPVNLAGTCAISVPAGMSAAGLPIGLQLIGRPFGEETILRAAHAFEQATEWHRHTAQL</sequence>
<keyword id="KW-0067">ATP-binding</keyword>
<keyword id="KW-0436">Ligase</keyword>
<keyword id="KW-0547">Nucleotide-binding</keyword>
<keyword id="KW-0648">Protein biosynthesis</keyword>
<keyword id="KW-1185">Reference proteome</keyword>
<name>GATA_GEOSL</name>
<feature type="chain" id="PRO_0000241106" description="Glutamyl-tRNA(Gln) amidotransferase subunit A">
    <location>
        <begin position="1"/>
        <end position="485"/>
    </location>
</feature>
<feature type="active site" description="Charge relay system" evidence="1">
    <location>
        <position position="78"/>
    </location>
</feature>
<feature type="active site" description="Charge relay system" evidence="1">
    <location>
        <position position="153"/>
    </location>
</feature>
<feature type="active site" description="Acyl-ester intermediate" evidence="1">
    <location>
        <position position="177"/>
    </location>
</feature>
<accession>Q746Y7</accession>